<accession>V9TS54</accession>
<keyword id="KW-0119">Carbohydrate metabolism</keyword>
<keyword id="KW-0325">Glycoprotein</keyword>
<keyword id="KW-0326">Glycosidase</keyword>
<keyword id="KW-0378">Hydrolase</keyword>
<keyword id="KW-0624">Polysaccharide degradation</keyword>
<keyword id="KW-0964">Secreted</keyword>
<keyword id="KW-0732">Signal</keyword>
<keyword id="KW-0858">Xylan degradation</keyword>
<dbReference type="EC" id="3.2.1.8" evidence="5"/>
<dbReference type="EMBL" id="KC962399">
    <property type="protein sequence ID" value="AHC72381.1"/>
    <property type="molecule type" value="mRNA"/>
</dbReference>
<dbReference type="SMR" id="V9TS54"/>
<dbReference type="UniPathway" id="UPA00114"/>
<dbReference type="GO" id="GO:0005576">
    <property type="term" value="C:extracellular region"/>
    <property type="evidence" value="ECO:0007669"/>
    <property type="project" value="UniProtKB-SubCell"/>
</dbReference>
<dbReference type="GO" id="GO:0031176">
    <property type="term" value="F:endo-1,4-beta-xylanase activity"/>
    <property type="evidence" value="ECO:0007669"/>
    <property type="project" value="UniProtKB-EC"/>
</dbReference>
<dbReference type="GO" id="GO:0045493">
    <property type="term" value="P:xylan catabolic process"/>
    <property type="evidence" value="ECO:0007669"/>
    <property type="project" value="UniProtKB-UniPathway"/>
</dbReference>
<dbReference type="FunFam" id="2.60.120.180:FF:000001">
    <property type="entry name" value="Endo-1,4-beta-xylanase"/>
    <property type="match status" value="1"/>
</dbReference>
<dbReference type="Gene3D" id="2.60.120.180">
    <property type="match status" value="1"/>
</dbReference>
<dbReference type="InterPro" id="IPR013320">
    <property type="entry name" value="ConA-like_dom_sf"/>
</dbReference>
<dbReference type="InterPro" id="IPR013319">
    <property type="entry name" value="GH11/12"/>
</dbReference>
<dbReference type="InterPro" id="IPR018208">
    <property type="entry name" value="GH11_AS_1"/>
</dbReference>
<dbReference type="InterPro" id="IPR033119">
    <property type="entry name" value="GH11_AS_2"/>
</dbReference>
<dbReference type="InterPro" id="IPR033123">
    <property type="entry name" value="GH11_dom"/>
</dbReference>
<dbReference type="InterPro" id="IPR001137">
    <property type="entry name" value="Glyco_hydro_11"/>
</dbReference>
<dbReference type="PANTHER" id="PTHR46828">
    <property type="entry name" value="ENDO-1,4-BETA-XYLANASE A-RELATED"/>
    <property type="match status" value="1"/>
</dbReference>
<dbReference type="PANTHER" id="PTHR46828:SF2">
    <property type="entry name" value="ENDO-1,4-BETA-XYLANASE A-RELATED"/>
    <property type="match status" value="1"/>
</dbReference>
<dbReference type="Pfam" id="PF00457">
    <property type="entry name" value="Glyco_hydro_11"/>
    <property type="match status" value="1"/>
</dbReference>
<dbReference type="PRINTS" id="PR00911">
    <property type="entry name" value="GLHYDRLASE11"/>
</dbReference>
<dbReference type="SUPFAM" id="SSF49899">
    <property type="entry name" value="Concanavalin A-like lectins/glucanases"/>
    <property type="match status" value="1"/>
</dbReference>
<dbReference type="PROSITE" id="PS00776">
    <property type="entry name" value="GH11_1"/>
    <property type="match status" value="1"/>
</dbReference>
<dbReference type="PROSITE" id="PS00777">
    <property type="entry name" value="GH11_2"/>
    <property type="match status" value="1"/>
</dbReference>
<dbReference type="PROSITE" id="PS51761">
    <property type="entry name" value="GH11_3"/>
    <property type="match status" value="1"/>
</dbReference>
<comment type="function">
    <text evidence="5">Endo-1,4-beta-xylanase involved in the hydrolysis of xylan, a major structural heterogeneous polysaccharide found in plant biomass representing the second most abundant polysaccharide in the biosphere, after cellulose (PubMed:24262572). Is an alkali-tolerant enzyme, exhibiting 50.6% of activity at pH 9.0, and 26.9% even at pH 10.0 (PubMed:24262572).</text>
</comment>
<comment type="catalytic activity">
    <reaction evidence="5">
        <text>Endohydrolysis of (1-&gt;4)-beta-D-xylosidic linkages in xylans.</text>
        <dbReference type="EC" id="3.2.1.8"/>
    </reaction>
</comment>
<comment type="activity regulation">
    <text evidence="5">Retains an activity of 52.5% in the presence of 5 mM SDS.</text>
</comment>
<comment type="biophysicochemical properties">
    <kinetics>
        <KM evidence="5">2.7 mM for beechwood xylan</KM>
        <Vmax evidence="5">2100.0 umol/min/mg enzyme towards beechwood xylan</Vmax>
    </kinetics>
    <phDependence>
        <text evidence="5">Optimum pH is 7.0.</text>
    </phDependence>
    <temperatureDependence>
        <text evidence="5">Optimum temperature is 60 degrees Celsius.</text>
    </temperatureDependence>
</comment>
<comment type="pathway">
    <text evidence="4 5">Glycan degradation; xylan degradation.</text>
</comment>
<comment type="subcellular location">
    <subcellularLocation>
        <location evidence="8">Secreted</location>
    </subcellularLocation>
</comment>
<comment type="biotechnology">
    <text evidence="5">SDS tolerance is important in detergent and textile solutions, and XYN11A thus might represent a potential candidate in these industries (PubMed:24262572). Moreover, the alkaline-active, cellulose activity-free Xyn11A with a high specific activity is interesting for the biobleaching of paper pulp (PubMed:24262572). Combining xylanase Xyn11A and xylosidases Xyl43A and/or Xyl43B leads to the release of reducing sugars as high as 1.29 folds of the sum of that released by each enzyme, which contributes to the formulation of optimised enzyme mixtures for the efficient hydrolysis of plant biomass (PubMed:24262572).</text>
</comment>
<comment type="similarity">
    <text evidence="5">Belongs to the glycosyl hydrolase 11 (cellulase G) family.</text>
</comment>
<proteinExistence type="evidence at protein level"/>
<reference key="1">
    <citation type="journal article" date="2014" name="Food Chem.">
        <title>Two xylose-tolerant GH43 bifunctional ?-xylosidase/?-arabinosidases and one GH11 xylanase from Humicola insolens and their synergy in the degradation of xylan.</title>
        <authorList>
            <person name="Yang X."/>
            <person name="Shi P."/>
            <person name="Huang H."/>
            <person name="Luo H."/>
            <person name="Wang Y."/>
            <person name="Zhang W."/>
            <person name="Yao B."/>
        </authorList>
    </citation>
    <scope>NUCLEOTIDE SEQUENCE [MRNA]</scope>
    <scope>FUNCTION</scope>
    <scope>CATALYTIC ACTIVITY</scope>
    <scope>BIOPHYSICOCHEMICAL PROPERTIES</scope>
    <scope>SUBSTRATE SPECIFICITY</scope>
    <scope>ACTIVITY REGULATION</scope>
    <scope>BIOTECHNOLOGY</scope>
    <source>
        <strain>Y1</strain>
    </source>
</reference>
<organism>
    <name type="scientific">Humicola insolens</name>
    <name type="common">Soft-rot fungus</name>
    <dbReference type="NCBI Taxonomy" id="85995"/>
    <lineage>
        <taxon>Eukaryota</taxon>
        <taxon>Fungi</taxon>
        <taxon>Dikarya</taxon>
        <taxon>Ascomycota</taxon>
        <taxon>Pezizomycotina</taxon>
        <taxon>Sordariomycetes</taxon>
        <taxon>Sordariomycetidae</taxon>
        <taxon>Sordariales</taxon>
        <taxon>Chaetomiaceae</taxon>
        <taxon>Mycothermus</taxon>
    </lineage>
</organism>
<feature type="signal peptide" evidence="1">
    <location>
        <begin position="1"/>
        <end position="17"/>
    </location>
</feature>
<feature type="chain" id="PRO_5004782136" description="Endo-1,4-beta-xylanase 11A" evidence="1">
    <location>
        <begin position="18"/>
        <end position="221"/>
    </location>
</feature>
<feature type="domain" description="GH11" evidence="3">
    <location>
        <begin position="28"/>
        <end position="218"/>
    </location>
</feature>
<feature type="active site" description="Nucleophile" evidence="3">
    <location>
        <position position="113"/>
    </location>
</feature>
<feature type="active site" description="Proton donor" evidence="3">
    <location>
        <position position="205"/>
    </location>
</feature>
<feature type="glycosylation site" description="N-linked (GlcNAc...) asparagine" evidence="2">
    <location>
        <position position="89"/>
    </location>
</feature>
<protein>
    <recommendedName>
        <fullName evidence="6">Endo-1,4-beta-xylanase 11A</fullName>
        <shortName evidence="6">Xylanase 11A</shortName>
        <ecNumber evidence="5">3.2.1.8</ecNumber>
    </recommendedName>
    <alternativeName>
        <fullName evidence="7">1,4-beta-D-xylan xylanohydrolase 11A</fullName>
    </alternativeName>
</protein>
<evidence type="ECO:0000255" key="1"/>
<evidence type="ECO:0000255" key="2">
    <source>
        <dbReference type="PROSITE-ProRule" id="PRU00498"/>
    </source>
</evidence>
<evidence type="ECO:0000255" key="3">
    <source>
        <dbReference type="PROSITE-ProRule" id="PRU01097"/>
    </source>
</evidence>
<evidence type="ECO:0000255" key="4">
    <source>
        <dbReference type="RuleBase" id="RU362015"/>
    </source>
</evidence>
<evidence type="ECO:0000269" key="5">
    <source>
    </source>
</evidence>
<evidence type="ECO:0000303" key="6">
    <source>
    </source>
</evidence>
<evidence type="ECO:0000305" key="7"/>
<evidence type="ECO:0000305" key="8">
    <source>
    </source>
</evidence>
<sequence>MVSFTTLLTAVATAVSAVTASPLEALKRGIQPGTGVHDGYFYSFWTDGRGYVDFNNGPRGSYRVSWSNVNNWVGGKGWNPGPPRRIAYNGTWNNWNVNSYLALYGWTTNPLVEYYIVEAYGSYNPSSGAARLGTIEDDGGVYDIYRTRRINQPSIIGTASFDQYWSVRRQKRVGGTIDTGKHFDEWRRQGNLQLGAWNYMIMATEGYQSSGSAEIEVRSLD</sequence>
<gene>
    <name evidence="6" type="primary">Xyn11A</name>
</gene>
<name>XY11A_HUMIN</name>